<reference key="1">
    <citation type="book" date="1980" name="Protides of the biological fluids, Proc. 28th colloquium">
        <title>Trends in the molecular evolution of alpha-crystallin.</title>
        <editorList>
            <person name="Peeters H."/>
        </editorList>
        <authorList>
            <person name="de Jong W.W."/>
            <person name="Zweers A."/>
            <person name="Goodman M."/>
        </authorList>
    </citation>
    <scope>PARTIAL PROTEIN SEQUENCE</scope>
</reference>
<accession>P02485</accession>
<sequence length="170" mass="19499">MDVTIQHPWFKRALGPFYPSRLFDQFFGEGLFEYDLLPFLSSTISPYYRQSLFRTALDSGISEVRSDRDRFVILLDVKHFSPEDLTVKVLDDFVEIHGKHNERQDDHGYISREFHRRYRLPTAVDQSALSCSLSADGMLTFSGPKLVDPSHGERTIPVSREEKPSSAPSS</sequence>
<keyword id="KW-0007">Acetylation</keyword>
<keyword id="KW-0143">Chaperone</keyword>
<keyword id="KW-0963">Cytoplasm</keyword>
<keyword id="KW-0903">Direct protein sequencing</keyword>
<keyword id="KW-0273">Eye lens protein</keyword>
<keyword id="KW-0325">Glycoprotein</keyword>
<keyword id="KW-0479">Metal-binding</keyword>
<keyword id="KW-0488">Methylation</keyword>
<keyword id="KW-0539">Nucleus</keyword>
<keyword id="KW-0597">Phosphoprotein</keyword>
<keyword id="KW-0862">Zinc</keyword>
<feature type="chain" id="PRO_0000125886" description="Alpha-crystallin A chain">
    <location>
        <begin position="1"/>
        <end position="170"/>
    </location>
</feature>
<feature type="domain" description="sHSP" evidence="5">
    <location>
        <begin position="52"/>
        <end position="161"/>
    </location>
</feature>
<feature type="region of interest" description="Required for complex formation with BFSP1 and BFSP2" evidence="4">
    <location>
        <begin position="1"/>
        <end position="63"/>
    </location>
</feature>
<feature type="region of interest" description="Disordered" evidence="6">
    <location>
        <begin position="144"/>
        <end position="170"/>
    </location>
</feature>
<feature type="compositionally biased region" description="Basic and acidic residues" evidence="6">
    <location>
        <begin position="148"/>
        <end position="164"/>
    </location>
</feature>
<feature type="binding site" evidence="2">
    <location>
        <position position="100"/>
    </location>
    <ligand>
        <name>Zn(2+)</name>
        <dbReference type="ChEBI" id="CHEBI:29105"/>
        <label>1</label>
    </ligand>
</feature>
<feature type="binding site" evidence="2">
    <location>
        <position position="102"/>
    </location>
    <ligand>
        <name>Zn(2+)</name>
        <dbReference type="ChEBI" id="CHEBI:29105"/>
        <label>1</label>
    </ligand>
</feature>
<feature type="binding site" evidence="2">
    <location>
        <position position="107"/>
    </location>
    <ligand>
        <name>Zn(2+)</name>
        <dbReference type="ChEBI" id="CHEBI:29105"/>
        <label>2</label>
    </ligand>
</feature>
<feature type="binding site" evidence="2">
    <location>
        <position position="151"/>
    </location>
    <ligand>
        <name>Zn(2+)</name>
        <dbReference type="ChEBI" id="CHEBI:29105"/>
        <label>3</label>
    </ligand>
</feature>
<feature type="modified residue" description="N-acetylmethionine" evidence="3 7">
    <location>
        <position position="1"/>
    </location>
</feature>
<feature type="modified residue" description="Deamidated glutamine; partial" evidence="1">
    <location>
        <position position="6"/>
    </location>
</feature>
<feature type="modified residue" description="Phosphoserine" evidence="4">
    <location>
        <position position="45"/>
    </location>
</feature>
<feature type="modified residue" description="Deamidated glutamine; partial" evidence="1">
    <location>
        <position position="50"/>
    </location>
</feature>
<feature type="modified residue" description="N6-acetyllysine" evidence="4">
    <location>
        <position position="99"/>
    </location>
</feature>
<feature type="modified residue" description="Deamidated asparagine; partial" evidence="1">
    <location>
        <position position="101"/>
    </location>
</feature>
<feature type="glycosylation site" description="O-linked (GlcNAc) serine" evidence="1">
    <location>
        <position position="159"/>
    </location>
</feature>
<protein>
    <recommendedName>
        <fullName>Alpha-crystallin A chain</fullName>
    </recommendedName>
</protein>
<organism>
    <name type="scientific">Tamandua mexicana</name>
    <name type="common">Northern Tamandua</name>
    <dbReference type="NCBI Taxonomy" id="9351"/>
    <lineage>
        <taxon>Eukaryota</taxon>
        <taxon>Metazoa</taxon>
        <taxon>Chordata</taxon>
        <taxon>Craniata</taxon>
        <taxon>Vertebrata</taxon>
        <taxon>Euteleostomi</taxon>
        <taxon>Mammalia</taxon>
        <taxon>Eutheria</taxon>
        <taxon>Xenarthra</taxon>
        <taxon>Pilosa</taxon>
        <taxon>Vermilingua</taxon>
        <taxon>Myrmecophagidae</taxon>
        <taxon>Tamandua</taxon>
    </lineage>
</organism>
<evidence type="ECO:0000250" key="1"/>
<evidence type="ECO:0000250" key="2">
    <source>
        <dbReference type="UniProtKB" id="P02470"/>
    </source>
</evidence>
<evidence type="ECO:0000250" key="3">
    <source>
        <dbReference type="UniProtKB" id="P02474"/>
    </source>
</evidence>
<evidence type="ECO:0000250" key="4">
    <source>
        <dbReference type="UniProtKB" id="P02489"/>
    </source>
</evidence>
<evidence type="ECO:0000255" key="5">
    <source>
        <dbReference type="PROSITE-ProRule" id="PRU00285"/>
    </source>
</evidence>
<evidence type="ECO:0000256" key="6">
    <source>
        <dbReference type="SAM" id="MobiDB-lite"/>
    </source>
</evidence>
<evidence type="ECO:0000305" key="7"/>
<comment type="function">
    <text evidence="4">Contributes to the transparency and refractive index of the lens. Acts as a chaperone, preventing aggregation of various proteins under a wide range of stress conditions. Required for the correct formation of lens intermediate filaments as part of a complex composed of BFSP1, BFSP2 and CRYAA.</text>
</comment>
<comment type="subunit">
    <text evidence="2 4">Heteromer composed of three CRYAA and one CRYAB subunits. Inter-subunit bridging via zinc ions enhances stability, which is crucial as there is no protein turn over in the lens. Can also form homodimers and homotetramers (dimers of dimers) which serve as the building blocks of homooligomers (By similarity). Within homooligomers, the zinc-binding motif is created from residues of 3 different molecules. His-100 and Glu-102 from one molecule are ligands of the zinc ion, and His-107 and His-151 residues from additional molecules complete the site with tetrahedral coordination geometry (By similarity). Part of a complex required for lens intermediate filament formation composed of BFSP1, BFSP2 and CRYAA (By similarity).</text>
</comment>
<comment type="subcellular location">
    <subcellularLocation>
        <location evidence="4">Cytoplasm</location>
    </subcellularLocation>
    <subcellularLocation>
        <location evidence="4">Nucleus</location>
    </subcellularLocation>
    <text evidence="4">Translocates to the nucleus during heat shock and resides in sub-nuclear structures known as SC35 speckles or nuclear splicing speckles.</text>
</comment>
<comment type="PTM">
    <text evidence="4">Acetylation at Lys-99 may increase chaperone activity.</text>
</comment>
<comment type="PTM">
    <text evidence="4">Undergoes age-dependent proteolytical cleavage at the C-terminus.</text>
</comment>
<comment type="similarity">
    <text evidence="5">Belongs to the small heat shock protein (HSP20) family.</text>
</comment>
<name>CRYAA_TAMME</name>
<proteinExistence type="evidence at protein level"/>
<dbReference type="PIR" id="A02887">
    <property type="entry name" value="CYMFAA"/>
</dbReference>
<dbReference type="SMR" id="P02485"/>
<dbReference type="GlyCosmos" id="P02485">
    <property type="glycosylation" value="1 site, No reported glycans"/>
</dbReference>
<dbReference type="GO" id="GO:0005737">
    <property type="term" value="C:cytoplasm"/>
    <property type="evidence" value="ECO:0000250"/>
    <property type="project" value="UniProtKB"/>
</dbReference>
<dbReference type="GO" id="GO:0005634">
    <property type="term" value="C:nucleus"/>
    <property type="evidence" value="ECO:0000250"/>
    <property type="project" value="UniProtKB"/>
</dbReference>
<dbReference type="GO" id="GO:0046872">
    <property type="term" value="F:metal ion binding"/>
    <property type="evidence" value="ECO:0007669"/>
    <property type="project" value="UniProtKB-KW"/>
</dbReference>
<dbReference type="GO" id="GO:0005212">
    <property type="term" value="F:structural constituent of eye lens"/>
    <property type="evidence" value="ECO:0007669"/>
    <property type="project" value="UniProtKB-KW"/>
</dbReference>
<dbReference type="GO" id="GO:0051082">
    <property type="term" value="F:unfolded protein binding"/>
    <property type="evidence" value="ECO:0007669"/>
    <property type="project" value="TreeGrafter"/>
</dbReference>
<dbReference type="GO" id="GO:0002088">
    <property type="term" value="P:lens development in camera-type eye"/>
    <property type="evidence" value="ECO:0007669"/>
    <property type="project" value="TreeGrafter"/>
</dbReference>
<dbReference type="GO" id="GO:0043066">
    <property type="term" value="P:negative regulation of apoptotic process"/>
    <property type="evidence" value="ECO:0007669"/>
    <property type="project" value="TreeGrafter"/>
</dbReference>
<dbReference type="GO" id="GO:0042026">
    <property type="term" value="P:protein refolding"/>
    <property type="evidence" value="ECO:0007669"/>
    <property type="project" value="TreeGrafter"/>
</dbReference>
<dbReference type="GO" id="GO:0009408">
    <property type="term" value="P:response to heat"/>
    <property type="evidence" value="ECO:0007669"/>
    <property type="project" value="TreeGrafter"/>
</dbReference>
<dbReference type="FunFam" id="2.60.40.790:FF:000008">
    <property type="entry name" value="Alpha-crystallin A chain"/>
    <property type="match status" value="1"/>
</dbReference>
<dbReference type="Gene3D" id="2.60.40.790">
    <property type="match status" value="1"/>
</dbReference>
<dbReference type="InterPro" id="IPR002068">
    <property type="entry name" value="A-crystallin/Hsp20_dom"/>
</dbReference>
<dbReference type="InterPro" id="IPR055269">
    <property type="entry name" value="Alpha-crystallin/HSP_16"/>
</dbReference>
<dbReference type="InterPro" id="IPR001436">
    <property type="entry name" value="Alpha-crystallin/sHSP_animal"/>
</dbReference>
<dbReference type="InterPro" id="IPR003090">
    <property type="entry name" value="Alpha-crystallin_N"/>
</dbReference>
<dbReference type="InterPro" id="IPR008978">
    <property type="entry name" value="HSP20-like_chaperone"/>
</dbReference>
<dbReference type="PANTHER" id="PTHR45640:SF14">
    <property type="entry name" value="ALPHA-CRYSTALLIN A CHAIN"/>
    <property type="match status" value="1"/>
</dbReference>
<dbReference type="PANTHER" id="PTHR45640">
    <property type="entry name" value="HEAT SHOCK PROTEIN HSP-12.2-RELATED"/>
    <property type="match status" value="1"/>
</dbReference>
<dbReference type="Pfam" id="PF00525">
    <property type="entry name" value="Crystallin"/>
    <property type="match status" value="1"/>
</dbReference>
<dbReference type="Pfam" id="PF00011">
    <property type="entry name" value="HSP20"/>
    <property type="match status" value="1"/>
</dbReference>
<dbReference type="PIRSF" id="PIRSF036514">
    <property type="entry name" value="Sm_HSP_B1"/>
    <property type="match status" value="1"/>
</dbReference>
<dbReference type="PRINTS" id="PR00299">
    <property type="entry name" value="ACRYSTALLIN"/>
</dbReference>
<dbReference type="SUPFAM" id="SSF49764">
    <property type="entry name" value="HSP20-like chaperones"/>
    <property type="match status" value="1"/>
</dbReference>
<dbReference type="PROSITE" id="PS01031">
    <property type="entry name" value="SHSP"/>
    <property type="match status" value="1"/>
</dbReference>
<gene>
    <name type="primary">CRYAA</name>
</gene>